<gene>
    <name evidence="1" type="primary">opgH</name>
    <name type="synonym">mdoH</name>
    <name type="ordered locus">PA5077</name>
</gene>
<keyword id="KW-0997">Cell inner membrane</keyword>
<keyword id="KW-1003">Cell membrane</keyword>
<keyword id="KW-0328">Glycosyltransferase</keyword>
<keyword id="KW-0472">Membrane</keyword>
<keyword id="KW-1185">Reference proteome</keyword>
<keyword id="KW-0808">Transferase</keyword>
<keyword id="KW-0812">Transmembrane</keyword>
<keyword id="KW-1133">Transmembrane helix</keyword>
<organism>
    <name type="scientific">Pseudomonas aeruginosa (strain ATCC 15692 / DSM 22644 / CIP 104116 / JCM 14847 / LMG 12228 / 1C / PRS 101 / PAO1)</name>
    <dbReference type="NCBI Taxonomy" id="208964"/>
    <lineage>
        <taxon>Bacteria</taxon>
        <taxon>Pseudomonadati</taxon>
        <taxon>Pseudomonadota</taxon>
        <taxon>Gammaproteobacteria</taxon>
        <taxon>Pseudomonadales</taxon>
        <taxon>Pseudomonadaceae</taxon>
        <taxon>Pseudomonas</taxon>
    </lineage>
</organism>
<protein>
    <recommendedName>
        <fullName evidence="1">Glucans biosynthesis glucosyltransferase H</fullName>
        <ecNumber evidence="1">2.4.1.-</ecNumber>
    </recommendedName>
</protein>
<sequence length="861" mass="96995">MNNPSTTKAPLADYLAHLPLAEEERERLGESASFSELHARLAGAEGAAADAGGDPALASVRARLQLGTPELDDAEMFGVDAQGRTFLKISPPIRRTKVIPEPWRTNILVRGWRRLTGRSNPPKPKRALPRARWQRVGSLRRFILLLLMLAQTSVATYYMKGILPYQGWAFVDLEELAQQSLLDTVQQVLPYVIQFGILALFAILFCWVSAGFWTALMGFWELLTGRDRYRISGSSAGSEPIAADARTAIVMPICNEDVPRVFAGLRATVESMAATGEMERFDFFVLSDTNDPDIAVAEQQAWLELCRETKGFGKIFYRRRRRRVKRKSGNIDDFCRRWGGDYRYMVVMDADSVMSGDCLAKLVRLMEANPEAGIIQTAPKASGMDTLYARMQQFATRVYGPLFTAGLHFWQLGESHYWGHNAIIRMQPFIDHCALAPLPGKGSFAGAILSHDFVEAALMRRAGWGVWIAYDLDGSYEELPPNLLDELKRDRRWCHGNLMNFRLFLVKGMHPVHRAVFLTGVMSYLSAPLWFFFLVLSTALLAVHQLMEPQYFLEPRQLFPIWPQWHPEKAIALFSTTLTLLFLPKLLSVMLIWAKGAKGFGGVIRVTLSMLLEMFFSVLLAPVRMLFHTRFVLAAFLGWSVQWNSPQRDDDATPWSEAIRRHGMQTLLGIAWTLLVAWLNPRFLWWLSPIVGSLILSIPVSVISSRVKLGLRARDEKLFLIPEEYDTPRELRATDEYTYENRWHALKDGFLKAAVDPLLNALACAMGTARHNRAQAIETVRGERIGKAIDKGPEQLDGATRLALLSDPVALSRLHTRVWEEDRDDWLGRWRKAEADDPHAASVPLAQVVPGDAGLLPAAQS</sequence>
<name>OPGH_PSEAE</name>
<reference key="1">
    <citation type="journal article" date="2000" name="Nature">
        <title>Complete genome sequence of Pseudomonas aeruginosa PAO1, an opportunistic pathogen.</title>
        <authorList>
            <person name="Stover C.K."/>
            <person name="Pham X.-Q.T."/>
            <person name="Erwin A.L."/>
            <person name="Mizoguchi S.D."/>
            <person name="Warrener P."/>
            <person name="Hickey M.J."/>
            <person name="Brinkman F.S.L."/>
            <person name="Hufnagle W.O."/>
            <person name="Kowalik D.J."/>
            <person name="Lagrou M."/>
            <person name="Garber R.L."/>
            <person name="Goltry L."/>
            <person name="Tolentino E."/>
            <person name="Westbrock-Wadman S."/>
            <person name="Yuan Y."/>
            <person name="Brody L.L."/>
            <person name="Coulter S.N."/>
            <person name="Folger K.R."/>
            <person name="Kas A."/>
            <person name="Larbig K."/>
            <person name="Lim R.M."/>
            <person name="Smith K.A."/>
            <person name="Spencer D.H."/>
            <person name="Wong G.K.-S."/>
            <person name="Wu Z."/>
            <person name="Paulsen I.T."/>
            <person name="Reizer J."/>
            <person name="Saier M.H. Jr."/>
            <person name="Hancock R.E.W."/>
            <person name="Lory S."/>
            <person name="Olson M.V."/>
        </authorList>
    </citation>
    <scope>NUCLEOTIDE SEQUENCE [LARGE SCALE GENOMIC DNA]</scope>
    <source>
        <strain>ATCC 15692 / DSM 22644 / CIP 104116 / JCM 14847 / LMG 12228 / 1C / PRS 101 / PAO1</strain>
    </source>
</reference>
<proteinExistence type="inferred from homology"/>
<comment type="function">
    <text evidence="1">Involved in the biosynthesis of osmoregulated periplasmic glucans (OPGs).</text>
</comment>
<comment type="pathway">
    <text evidence="1">Glycan metabolism; osmoregulated periplasmic glucan (OPG) biosynthesis.</text>
</comment>
<comment type="subcellular location">
    <subcellularLocation>
        <location evidence="1">Cell inner membrane</location>
        <topology evidence="1">Multi-pass membrane protein</topology>
    </subcellularLocation>
</comment>
<comment type="similarity">
    <text evidence="1">Belongs to the glycosyltransferase 2 family. OpgH subfamily.</text>
</comment>
<evidence type="ECO:0000255" key="1">
    <source>
        <dbReference type="HAMAP-Rule" id="MF_01072"/>
    </source>
</evidence>
<feature type="chain" id="PRO_0000210354" description="Glucans biosynthesis glucosyltransferase H">
    <location>
        <begin position="1"/>
        <end position="861"/>
    </location>
</feature>
<feature type="transmembrane region" description="Helical" evidence="1">
    <location>
        <begin position="142"/>
        <end position="159"/>
    </location>
</feature>
<feature type="transmembrane region" description="Helical" evidence="1">
    <location>
        <begin position="198"/>
        <end position="220"/>
    </location>
</feature>
<feature type="transmembrane region" description="Helical" evidence="1">
    <location>
        <begin position="521"/>
        <end position="543"/>
    </location>
</feature>
<feature type="transmembrane region" description="Helical" evidence="1">
    <location>
        <begin position="572"/>
        <end position="594"/>
    </location>
</feature>
<feature type="transmembrane region" description="Helical" evidence="1">
    <location>
        <begin position="601"/>
        <end position="623"/>
    </location>
</feature>
<feature type="transmembrane region" description="Helical" evidence="1">
    <location>
        <begin position="683"/>
        <end position="705"/>
    </location>
</feature>
<dbReference type="EC" id="2.4.1.-" evidence="1"/>
<dbReference type="EMBL" id="AE004091">
    <property type="protein sequence ID" value="AAG08462.1"/>
    <property type="molecule type" value="Genomic_DNA"/>
</dbReference>
<dbReference type="PIR" id="H83012">
    <property type="entry name" value="H83012"/>
</dbReference>
<dbReference type="RefSeq" id="NP_253764.1">
    <property type="nucleotide sequence ID" value="NC_002516.2"/>
</dbReference>
<dbReference type="RefSeq" id="WP_003103448.1">
    <property type="nucleotide sequence ID" value="NZ_QZGE01000002.1"/>
</dbReference>
<dbReference type="FunCoup" id="Q9HUA6">
    <property type="interactions" value="33"/>
</dbReference>
<dbReference type="STRING" id="208964.PA5077"/>
<dbReference type="CAZy" id="GT2">
    <property type="family name" value="Glycosyltransferase Family 2"/>
</dbReference>
<dbReference type="PaxDb" id="208964-PA5077"/>
<dbReference type="DNASU" id="879628"/>
<dbReference type="GeneID" id="879628"/>
<dbReference type="KEGG" id="pae:PA5077"/>
<dbReference type="PATRIC" id="fig|208964.12.peg.5322"/>
<dbReference type="PseudoCAP" id="PA5077"/>
<dbReference type="HOGENOM" id="CLU_015730_0_0_6"/>
<dbReference type="InParanoid" id="Q9HUA6"/>
<dbReference type="OrthoDB" id="9775281at2"/>
<dbReference type="PhylomeDB" id="Q9HUA6"/>
<dbReference type="BioCyc" id="PAER208964:G1FZ6-5193-MONOMER"/>
<dbReference type="UniPathway" id="UPA00637"/>
<dbReference type="Proteomes" id="UP000002438">
    <property type="component" value="Chromosome"/>
</dbReference>
<dbReference type="GO" id="GO:0005886">
    <property type="term" value="C:plasma membrane"/>
    <property type="evidence" value="ECO:0000318"/>
    <property type="project" value="GO_Central"/>
</dbReference>
<dbReference type="GO" id="GO:0016758">
    <property type="term" value="F:hexosyltransferase activity"/>
    <property type="evidence" value="ECO:0000318"/>
    <property type="project" value="GO_Central"/>
</dbReference>
<dbReference type="GO" id="GO:0009250">
    <property type="term" value="P:glucan biosynthetic process"/>
    <property type="evidence" value="ECO:0007669"/>
    <property type="project" value="UniProtKB-UniRule"/>
</dbReference>
<dbReference type="CDD" id="cd04191">
    <property type="entry name" value="Glucan_BSP_MdoH"/>
    <property type="match status" value="1"/>
</dbReference>
<dbReference type="FunFam" id="3.90.550.10:FF:000047">
    <property type="entry name" value="Glucans biosynthesis glucosyltransferase H"/>
    <property type="match status" value="1"/>
</dbReference>
<dbReference type="Gene3D" id="3.90.550.10">
    <property type="entry name" value="Spore Coat Polysaccharide Biosynthesis Protein SpsA, Chain A"/>
    <property type="match status" value="1"/>
</dbReference>
<dbReference type="HAMAP" id="MF_01072">
    <property type="entry name" value="MdoH_OpgH"/>
    <property type="match status" value="1"/>
</dbReference>
<dbReference type="InterPro" id="IPR023725">
    <property type="entry name" value="Glucans_biosynth_gluTrFase_H"/>
</dbReference>
<dbReference type="InterPro" id="IPR001173">
    <property type="entry name" value="Glyco_trans_2-like"/>
</dbReference>
<dbReference type="InterPro" id="IPR050321">
    <property type="entry name" value="Glycosyltr_2/OpgH_subfam"/>
</dbReference>
<dbReference type="InterPro" id="IPR029044">
    <property type="entry name" value="Nucleotide-diphossugar_trans"/>
</dbReference>
<dbReference type="NCBIfam" id="NF003955">
    <property type="entry name" value="PRK05454.1-1"/>
    <property type="match status" value="1"/>
</dbReference>
<dbReference type="NCBIfam" id="NF003958">
    <property type="entry name" value="PRK05454.2-1"/>
    <property type="match status" value="1"/>
</dbReference>
<dbReference type="NCBIfam" id="NF003962">
    <property type="entry name" value="PRK05454.2-5"/>
    <property type="match status" value="1"/>
</dbReference>
<dbReference type="PANTHER" id="PTHR43867">
    <property type="entry name" value="CELLULOSE SYNTHASE CATALYTIC SUBUNIT A [UDP-FORMING]"/>
    <property type="match status" value="1"/>
</dbReference>
<dbReference type="PANTHER" id="PTHR43867:SF5">
    <property type="entry name" value="GLUCANS BIOSYNTHESIS GLUCOSYLTRANSFERASE H"/>
    <property type="match status" value="1"/>
</dbReference>
<dbReference type="Pfam" id="PF00535">
    <property type="entry name" value="Glycos_transf_2"/>
    <property type="match status" value="1"/>
</dbReference>
<dbReference type="SUPFAM" id="SSF53448">
    <property type="entry name" value="Nucleotide-diphospho-sugar transferases"/>
    <property type="match status" value="1"/>
</dbReference>
<accession>Q9HUA6</accession>